<sequence length="301" mass="32385">MKLNGVFTALATPFRDDLSLDERALASFVDWQISSGISGIVPCGTTGESATLNFEEYCTVVRLCIETARGRILVIAGAGSHCTTETISRALFVQSAGADAALIVVPYYNRPSDEGVYQHFRAVHDATNIPIVLYNVPQRTAIDISNDTIRRIAELPRVVGIKDCTGAERVAALKAILPEKVAILSGEDETALASYMNGGSGCISVVSNVAPKMAVELYRLHALGKINMAKQVSGNLAALSRVLFIEPSPSPTKYALSLMGKMRPKVRLPLVELTSSGQTAVKNVLETLDLLRQQKAMHSQL</sequence>
<organism>
    <name type="scientific">Anaplasma marginale (strain St. Maries)</name>
    <dbReference type="NCBI Taxonomy" id="234826"/>
    <lineage>
        <taxon>Bacteria</taxon>
        <taxon>Pseudomonadati</taxon>
        <taxon>Pseudomonadota</taxon>
        <taxon>Alphaproteobacteria</taxon>
        <taxon>Rickettsiales</taxon>
        <taxon>Anaplasmataceae</taxon>
        <taxon>Anaplasma</taxon>
    </lineage>
</organism>
<proteinExistence type="inferred from homology"/>
<reference key="1">
    <citation type="journal article" date="2005" name="Proc. Natl. Acad. Sci. U.S.A.">
        <title>Complete genome sequencing of Anaplasma marginale reveals that the surface is skewed to two superfamilies of outer membrane proteins.</title>
        <authorList>
            <person name="Brayton K.A."/>
            <person name="Kappmeyer L.S."/>
            <person name="Herndon D.R."/>
            <person name="Dark M.J."/>
            <person name="Tibbals D.L."/>
            <person name="Palmer G.H."/>
            <person name="McGuire T.C."/>
            <person name="Knowles D.P. Jr."/>
        </authorList>
    </citation>
    <scope>NUCLEOTIDE SEQUENCE [LARGE SCALE GENOMIC DNA]</scope>
    <source>
        <strain>St. Maries</strain>
    </source>
</reference>
<gene>
    <name evidence="1" type="primary">dapA</name>
    <name type="ordered locus">AM407</name>
</gene>
<feature type="chain" id="PRO_0000340934" description="4-hydroxy-tetrahydrodipicolinate synthase">
    <location>
        <begin position="1"/>
        <end position="301"/>
    </location>
</feature>
<feature type="active site" description="Proton donor/acceptor" evidence="1">
    <location>
        <position position="134"/>
    </location>
</feature>
<feature type="active site" description="Schiff-base intermediate with substrate" evidence="1">
    <location>
        <position position="162"/>
    </location>
</feature>
<feature type="binding site" evidence="1">
    <location>
        <position position="46"/>
    </location>
    <ligand>
        <name>pyruvate</name>
        <dbReference type="ChEBI" id="CHEBI:15361"/>
    </ligand>
</feature>
<feature type="binding site" evidence="1">
    <location>
        <position position="203"/>
    </location>
    <ligand>
        <name>pyruvate</name>
        <dbReference type="ChEBI" id="CHEBI:15361"/>
    </ligand>
</feature>
<feature type="site" description="Part of a proton relay during catalysis" evidence="1">
    <location>
        <position position="45"/>
    </location>
</feature>
<feature type="site" description="Part of a proton relay during catalysis" evidence="1">
    <location>
        <position position="108"/>
    </location>
</feature>
<comment type="function">
    <text evidence="1">Catalyzes the condensation of (S)-aspartate-beta-semialdehyde [(S)-ASA] and pyruvate to 4-hydroxy-tetrahydrodipicolinate (HTPA).</text>
</comment>
<comment type="catalytic activity">
    <reaction evidence="1">
        <text>L-aspartate 4-semialdehyde + pyruvate = (2S,4S)-4-hydroxy-2,3,4,5-tetrahydrodipicolinate + H2O + H(+)</text>
        <dbReference type="Rhea" id="RHEA:34171"/>
        <dbReference type="ChEBI" id="CHEBI:15361"/>
        <dbReference type="ChEBI" id="CHEBI:15377"/>
        <dbReference type="ChEBI" id="CHEBI:15378"/>
        <dbReference type="ChEBI" id="CHEBI:67139"/>
        <dbReference type="ChEBI" id="CHEBI:537519"/>
        <dbReference type="EC" id="4.3.3.7"/>
    </reaction>
</comment>
<comment type="pathway">
    <text evidence="1">Amino-acid biosynthesis; L-lysine biosynthesis via DAP pathway; (S)-tetrahydrodipicolinate from L-aspartate: step 3/4.</text>
</comment>
<comment type="subunit">
    <text evidence="1">Homotetramer; dimer of dimers.</text>
</comment>
<comment type="subcellular location">
    <subcellularLocation>
        <location evidence="1">Cytoplasm</location>
    </subcellularLocation>
</comment>
<comment type="similarity">
    <text evidence="1">Belongs to the DapA family.</text>
</comment>
<comment type="caution">
    <text evidence="2">Was originally thought to be a dihydrodipicolinate synthase (DHDPS), catalyzing the condensation of (S)-aspartate-beta-semialdehyde [(S)-ASA] and pyruvate to dihydrodipicolinate (DHDP). However, it was shown in E.coli that the product of the enzymatic reaction is not dihydrodipicolinate but in fact (4S)-4-hydroxy-2,3,4,5-tetrahydro-(2S)-dipicolinic acid (HTPA), and that the consecutive dehydration reaction leading to DHDP is not spontaneous but catalyzed by DapB.</text>
</comment>
<dbReference type="EC" id="4.3.3.7" evidence="1"/>
<dbReference type="EMBL" id="CP000030">
    <property type="protein sequence ID" value="AAV86465.1"/>
    <property type="molecule type" value="Genomic_DNA"/>
</dbReference>
<dbReference type="RefSeq" id="WP_010263450.1">
    <property type="nucleotide sequence ID" value="NC_004842.2"/>
</dbReference>
<dbReference type="SMR" id="Q5PB64"/>
<dbReference type="KEGG" id="ama:AM407"/>
<dbReference type="HOGENOM" id="CLU_049343_7_1_5"/>
<dbReference type="UniPathway" id="UPA00034">
    <property type="reaction ID" value="UER00017"/>
</dbReference>
<dbReference type="GO" id="GO:0005829">
    <property type="term" value="C:cytosol"/>
    <property type="evidence" value="ECO:0007669"/>
    <property type="project" value="TreeGrafter"/>
</dbReference>
<dbReference type="GO" id="GO:0008840">
    <property type="term" value="F:4-hydroxy-tetrahydrodipicolinate synthase activity"/>
    <property type="evidence" value="ECO:0007669"/>
    <property type="project" value="UniProtKB-UniRule"/>
</dbReference>
<dbReference type="GO" id="GO:0019877">
    <property type="term" value="P:diaminopimelate biosynthetic process"/>
    <property type="evidence" value="ECO:0007669"/>
    <property type="project" value="UniProtKB-UniRule"/>
</dbReference>
<dbReference type="GO" id="GO:0009089">
    <property type="term" value="P:lysine biosynthetic process via diaminopimelate"/>
    <property type="evidence" value="ECO:0007669"/>
    <property type="project" value="UniProtKB-UniRule"/>
</dbReference>
<dbReference type="CDD" id="cd00950">
    <property type="entry name" value="DHDPS"/>
    <property type="match status" value="1"/>
</dbReference>
<dbReference type="Gene3D" id="3.20.20.70">
    <property type="entry name" value="Aldolase class I"/>
    <property type="match status" value="1"/>
</dbReference>
<dbReference type="HAMAP" id="MF_00418">
    <property type="entry name" value="DapA"/>
    <property type="match status" value="1"/>
</dbReference>
<dbReference type="InterPro" id="IPR013785">
    <property type="entry name" value="Aldolase_TIM"/>
</dbReference>
<dbReference type="InterPro" id="IPR005263">
    <property type="entry name" value="DapA"/>
</dbReference>
<dbReference type="InterPro" id="IPR002220">
    <property type="entry name" value="DapA-like"/>
</dbReference>
<dbReference type="InterPro" id="IPR020625">
    <property type="entry name" value="Schiff_base-form_aldolases_AS"/>
</dbReference>
<dbReference type="InterPro" id="IPR020624">
    <property type="entry name" value="Schiff_base-form_aldolases_CS"/>
</dbReference>
<dbReference type="NCBIfam" id="TIGR00674">
    <property type="entry name" value="dapA"/>
    <property type="match status" value="1"/>
</dbReference>
<dbReference type="PANTHER" id="PTHR12128:SF66">
    <property type="entry name" value="4-HYDROXY-2-OXOGLUTARATE ALDOLASE, MITOCHONDRIAL"/>
    <property type="match status" value="1"/>
</dbReference>
<dbReference type="PANTHER" id="PTHR12128">
    <property type="entry name" value="DIHYDRODIPICOLINATE SYNTHASE"/>
    <property type="match status" value="1"/>
</dbReference>
<dbReference type="Pfam" id="PF00701">
    <property type="entry name" value="DHDPS"/>
    <property type="match status" value="1"/>
</dbReference>
<dbReference type="PIRSF" id="PIRSF001365">
    <property type="entry name" value="DHDPS"/>
    <property type="match status" value="1"/>
</dbReference>
<dbReference type="PRINTS" id="PR00146">
    <property type="entry name" value="DHPICSNTHASE"/>
</dbReference>
<dbReference type="SMART" id="SM01130">
    <property type="entry name" value="DHDPS"/>
    <property type="match status" value="1"/>
</dbReference>
<dbReference type="SUPFAM" id="SSF51569">
    <property type="entry name" value="Aldolase"/>
    <property type="match status" value="1"/>
</dbReference>
<dbReference type="PROSITE" id="PS00665">
    <property type="entry name" value="DHDPS_1"/>
    <property type="match status" value="1"/>
</dbReference>
<dbReference type="PROSITE" id="PS00666">
    <property type="entry name" value="DHDPS_2"/>
    <property type="match status" value="1"/>
</dbReference>
<protein>
    <recommendedName>
        <fullName evidence="1">4-hydroxy-tetrahydrodipicolinate synthase</fullName>
        <shortName evidence="1">HTPA synthase</shortName>
        <ecNumber evidence="1">4.3.3.7</ecNumber>
    </recommendedName>
</protein>
<evidence type="ECO:0000255" key="1">
    <source>
        <dbReference type="HAMAP-Rule" id="MF_00418"/>
    </source>
</evidence>
<evidence type="ECO:0000305" key="2"/>
<keyword id="KW-0028">Amino-acid biosynthesis</keyword>
<keyword id="KW-0963">Cytoplasm</keyword>
<keyword id="KW-0220">Diaminopimelate biosynthesis</keyword>
<keyword id="KW-0456">Lyase</keyword>
<keyword id="KW-0457">Lysine biosynthesis</keyword>
<keyword id="KW-0704">Schiff base</keyword>
<name>DAPA_ANAMM</name>
<accession>Q5PB64</accession>